<protein>
    <recommendedName>
        <fullName>Fumarate and nitrate reduction regulatory protein</fullName>
    </recommendedName>
</protein>
<sequence>MIPEKRIIRRIQSGGCAIHCQDCSISQLCIPFTLNEHELDQLDNIIERKKPIQKGQTLFKAGDELKSLYAIRSGTIKSYTITEQGDEQITGFHLAGDLVGFDAIGSGHHPSFAQALETSMVCEIPFETLDDLSGKMPNLRQQMMRLMSGEIKGDQDMILLLSKKNAEERLAAFIYNLSRRFAQRGFSPREFRLTMTRGDIGNYLGLTVETISRLLGRFQKSGMLAVKGKYITIENSDALAALAGHTRNVA</sequence>
<keyword id="KW-0004">4Fe-4S</keyword>
<keyword id="KW-0010">Activator</keyword>
<keyword id="KW-0963">Cytoplasm</keyword>
<keyword id="KW-0238">DNA-binding</keyword>
<keyword id="KW-0408">Iron</keyword>
<keyword id="KW-0411">Iron-sulfur</keyword>
<keyword id="KW-0479">Metal-binding</keyword>
<keyword id="KW-0678">Repressor</keyword>
<keyword id="KW-0804">Transcription</keyword>
<keyword id="KW-0805">Transcription regulation</keyword>
<comment type="function">
    <text evidence="1">Global transcription factor that controls the expression of over 100 target genes in response to anoxia. It facilitates the adaptation to anaerobic growth conditions by regulating the expression of gene products that are involved in anaerobic energy metabolism. When the terminal electron acceptor, O(2), is no longer available, it represses the synthesis of enzymes involved in aerobic respiration and increases the synthesis of enzymes required for anaerobic respiration (By similarity).</text>
</comment>
<comment type="cofactor">
    <cofactor evidence="1">
        <name>[4Fe-4S] cluster</name>
        <dbReference type="ChEBI" id="CHEBI:49883"/>
    </cofactor>
    <text evidence="1">Binds 1 [4Fe-4S] cluster per subunit.</text>
</comment>
<comment type="subunit">
    <text evidence="1">Homodimer.</text>
</comment>
<comment type="subcellular location">
    <subcellularLocation>
        <location evidence="4">Cytoplasm</location>
    </subcellularLocation>
</comment>
<evidence type="ECO:0000250" key="1"/>
<evidence type="ECO:0000255" key="2"/>
<evidence type="ECO:0000255" key="3">
    <source>
        <dbReference type="PROSITE-ProRule" id="PRU00387"/>
    </source>
</evidence>
<evidence type="ECO:0000305" key="4"/>
<gene>
    <name type="primary">fnr</name>
    <name type="synonym">oxrA</name>
</gene>
<dbReference type="EMBL" id="AF124395">
    <property type="protein sequence ID" value="AAD19743.1"/>
    <property type="molecule type" value="Genomic_DNA"/>
</dbReference>
<dbReference type="RefSeq" id="WP_000611914.1">
    <property type="nucleotide sequence ID" value="NZ_VCTQ02000030.1"/>
</dbReference>
<dbReference type="SMR" id="P0A2T9"/>
<dbReference type="PATRIC" id="fig|82689.3.peg.4637"/>
<dbReference type="GO" id="GO:0005829">
    <property type="term" value="C:cytosol"/>
    <property type="evidence" value="ECO:0007669"/>
    <property type="project" value="TreeGrafter"/>
</dbReference>
<dbReference type="GO" id="GO:0051539">
    <property type="term" value="F:4 iron, 4 sulfur cluster binding"/>
    <property type="evidence" value="ECO:0007669"/>
    <property type="project" value="UniProtKB-KW"/>
</dbReference>
<dbReference type="GO" id="GO:0003677">
    <property type="term" value="F:DNA binding"/>
    <property type="evidence" value="ECO:0007669"/>
    <property type="project" value="UniProtKB-KW"/>
</dbReference>
<dbReference type="GO" id="GO:0003700">
    <property type="term" value="F:DNA-binding transcription factor activity"/>
    <property type="evidence" value="ECO:0007669"/>
    <property type="project" value="InterPro"/>
</dbReference>
<dbReference type="GO" id="GO:0046872">
    <property type="term" value="F:metal ion binding"/>
    <property type="evidence" value="ECO:0007669"/>
    <property type="project" value="UniProtKB-KW"/>
</dbReference>
<dbReference type="CDD" id="cd00038">
    <property type="entry name" value="CAP_ED"/>
    <property type="match status" value="1"/>
</dbReference>
<dbReference type="CDD" id="cd00092">
    <property type="entry name" value="HTH_CRP"/>
    <property type="match status" value="1"/>
</dbReference>
<dbReference type="FunFam" id="1.10.10.10:FF:000028">
    <property type="entry name" value="Fumarate/nitrate reduction transcriptional regulator Fnr"/>
    <property type="match status" value="1"/>
</dbReference>
<dbReference type="FunFam" id="2.60.120.10:FF:000004">
    <property type="entry name" value="Fumarate/nitrate reduction transcriptional regulator Fnr"/>
    <property type="match status" value="1"/>
</dbReference>
<dbReference type="Gene3D" id="2.60.120.10">
    <property type="entry name" value="Jelly Rolls"/>
    <property type="match status" value="1"/>
</dbReference>
<dbReference type="Gene3D" id="1.10.10.10">
    <property type="entry name" value="Winged helix-like DNA-binding domain superfamily/Winged helix DNA-binding domain"/>
    <property type="match status" value="1"/>
</dbReference>
<dbReference type="InterPro" id="IPR000595">
    <property type="entry name" value="cNMP-bd_dom"/>
</dbReference>
<dbReference type="InterPro" id="IPR018490">
    <property type="entry name" value="cNMP-bd_dom_sf"/>
</dbReference>
<dbReference type="InterPro" id="IPR050397">
    <property type="entry name" value="Env_Response_Regulators"/>
</dbReference>
<dbReference type="InterPro" id="IPR012318">
    <property type="entry name" value="HTH_CRP"/>
</dbReference>
<dbReference type="InterPro" id="IPR014710">
    <property type="entry name" value="RmlC-like_jellyroll"/>
</dbReference>
<dbReference type="InterPro" id="IPR018335">
    <property type="entry name" value="Tscrpt_reg_HTH_Crp-type_CS"/>
</dbReference>
<dbReference type="InterPro" id="IPR036388">
    <property type="entry name" value="WH-like_DNA-bd_sf"/>
</dbReference>
<dbReference type="InterPro" id="IPR036390">
    <property type="entry name" value="WH_DNA-bd_sf"/>
</dbReference>
<dbReference type="NCBIfam" id="NF008365">
    <property type="entry name" value="PRK11161.1"/>
    <property type="match status" value="1"/>
</dbReference>
<dbReference type="PANTHER" id="PTHR24567">
    <property type="entry name" value="CRP FAMILY TRANSCRIPTIONAL REGULATORY PROTEIN"/>
    <property type="match status" value="1"/>
</dbReference>
<dbReference type="PANTHER" id="PTHR24567:SF75">
    <property type="entry name" value="FUMARATE AND NITRATE REDUCTION REGULATORY PROTEIN"/>
    <property type="match status" value="1"/>
</dbReference>
<dbReference type="Pfam" id="PF00027">
    <property type="entry name" value="cNMP_binding"/>
    <property type="match status" value="1"/>
</dbReference>
<dbReference type="Pfam" id="PF13545">
    <property type="entry name" value="HTH_Crp_2"/>
    <property type="match status" value="1"/>
</dbReference>
<dbReference type="PRINTS" id="PR00034">
    <property type="entry name" value="HTHCRP"/>
</dbReference>
<dbReference type="SMART" id="SM00100">
    <property type="entry name" value="cNMP"/>
    <property type="match status" value="1"/>
</dbReference>
<dbReference type="SMART" id="SM00419">
    <property type="entry name" value="HTH_CRP"/>
    <property type="match status" value="1"/>
</dbReference>
<dbReference type="SUPFAM" id="SSF51206">
    <property type="entry name" value="cAMP-binding domain-like"/>
    <property type="match status" value="1"/>
</dbReference>
<dbReference type="SUPFAM" id="SSF46785">
    <property type="entry name" value="Winged helix' DNA-binding domain"/>
    <property type="match status" value="1"/>
</dbReference>
<dbReference type="PROSITE" id="PS50042">
    <property type="entry name" value="CNMP_BINDING_3"/>
    <property type="match status" value="1"/>
</dbReference>
<dbReference type="PROSITE" id="PS00042">
    <property type="entry name" value="HTH_CRP_1"/>
    <property type="match status" value="1"/>
</dbReference>
<dbReference type="PROSITE" id="PS51063">
    <property type="entry name" value="HTH_CRP_2"/>
    <property type="match status" value="1"/>
</dbReference>
<accession>P0A2T9</accession>
<accession>P37428</accession>
<accession>P58996</accession>
<feature type="chain" id="PRO_0000100165" description="Fumarate and nitrate reduction regulatory protein">
    <location>
        <begin position="1"/>
        <end position="250"/>
    </location>
</feature>
<feature type="domain" description="HTH crp-type" evidence="3">
    <location>
        <begin position="164"/>
        <end position="237"/>
    </location>
</feature>
<feature type="DNA-binding region" description="H-T-H motif" evidence="3">
    <location>
        <begin position="197"/>
        <end position="216"/>
    </location>
</feature>
<feature type="region of interest" description="Essential for the oxygen-regulated activity" evidence="1">
    <location>
        <begin position="20"/>
        <end position="29"/>
    </location>
</feature>
<feature type="region of interest" description="Activating region 2A" evidence="2">
    <location>
        <begin position="47"/>
        <end position="50"/>
    </location>
</feature>
<feature type="region of interest" description="Activating region 3A" evidence="2">
    <location>
        <begin position="60"/>
        <end position="61"/>
    </location>
</feature>
<feature type="region of interest" description="Activating region 1A" evidence="2">
    <location>
        <begin position="71"/>
        <end position="75"/>
    </location>
</feature>
<feature type="region of interest" description="Activating region 3B" evidence="2">
    <location>
        <position position="81"/>
    </location>
</feature>
<feature type="region of interest" description="Activating region 3C" evidence="2">
    <location>
        <begin position="85"/>
        <end position="87"/>
    </location>
</feature>
<feature type="region of interest" description="Activating region 3D" evidence="2">
    <location>
        <position position="112"/>
    </location>
</feature>
<feature type="region of interest" description="Activating region 1B" evidence="2">
    <location>
        <begin position="116"/>
        <end position="121"/>
    </location>
</feature>
<feature type="region of interest" description="Activating region 2B" evidence="2">
    <location>
        <begin position="123"/>
        <end position="124"/>
    </location>
</feature>
<feature type="region of interest" description="Activating region 2C" evidence="2">
    <location>
        <begin position="127"/>
        <end position="128"/>
    </location>
</feature>
<feature type="region of interest" description="Dimerization" evidence="2">
    <location>
        <begin position="140"/>
        <end position="159"/>
    </location>
</feature>
<feature type="region of interest" description="Activating region 1C" evidence="2">
    <location>
        <begin position="181"/>
        <end position="191"/>
    </location>
</feature>
<feature type="binding site" evidence="2">
    <location>
        <position position="20"/>
    </location>
    <ligand>
        <name>[4Fe-4S] cluster</name>
        <dbReference type="ChEBI" id="CHEBI:49883"/>
    </ligand>
</feature>
<feature type="binding site" evidence="2">
    <location>
        <position position="23"/>
    </location>
    <ligand>
        <name>[4Fe-4S] cluster</name>
        <dbReference type="ChEBI" id="CHEBI:49883"/>
    </ligand>
</feature>
<feature type="binding site" evidence="2">
    <location>
        <position position="29"/>
    </location>
    <ligand>
        <name>[4Fe-4S] cluster</name>
        <dbReference type="ChEBI" id="CHEBI:49883"/>
    </ligand>
</feature>
<feature type="binding site" evidence="2">
    <location>
        <position position="122"/>
    </location>
    <ligand>
        <name>[4Fe-4S] cluster</name>
        <dbReference type="ChEBI" id="CHEBI:49883"/>
    </ligand>
</feature>
<name>FNR_SALMS</name>
<reference key="1">
    <citation type="submission" date="1999-01" db="EMBL/GenBank/DDBJ databases">
        <title>FNR transcriptional activator (fnr) gene from Salmonella muenster.</title>
        <authorList>
            <person name="McFall C.R."/>
            <person name="Kunonga N.I."/>
            <person name="Gies A.J."/>
            <person name="Smeltzer M.S."/>
            <person name="Sobieski R.J."/>
            <person name="Crupper S.S."/>
        </authorList>
    </citation>
    <scope>NUCLEOTIDE SEQUENCE [GENOMIC DNA]</scope>
</reference>
<proteinExistence type="inferred from homology"/>
<organism>
    <name type="scientific">Salmonella muenster</name>
    <dbReference type="NCBI Taxonomy" id="82689"/>
    <lineage>
        <taxon>Bacteria</taxon>
        <taxon>Pseudomonadati</taxon>
        <taxon>Pseudomonadota</taxon>
        <taxon>Gammaproteobacteria</taxon>
        <taxon>Enterobacterales</taxon>
        <taxon>Enterobacteriaceae</taxon>
        <taxon>Salmonella</taxon>
    </lineage>
</organism>